<gene>
    <name evidence="1" type="primary">tam</name>
    <name type="ordered locus">SDY_1625</name>
</gene>
<feature type="chain" id="PRO_1000056580" description="Trans-aconitate 2-methyltransferase">
    <location>
        <begin position="1"/>
        <end position="252"/>
    </location>
</feature>
<name>TAM_SHIDS</name>
<protein>
    <recommendedName>
        <fullName evidence="1">Trans-aconitate 2-methyltransferase</fullName>
        <ecNumber evidence="1">2.1.1.144</ecNumber>
    </recommendedName>
</protein>
<comment type="function">
    <text evidence="1">Catalyzes the S-adenosylmethionine monomethyl esterification of trans-aconitate.</text>
</comment>
<comment type="catalytic activity">
    <reaction evidence="1">
        <text>trans-aconitate + S-adenosyl-L-methionine = (E)-3-(methoxycarbonyl)pent-2-enedioate + S-adenosyl-L-homocysteine</text>
        <dbReference type="Rhea" id="RHEA:14969"/>
        <dbReference type="ChEBI" id="CHEBI:15708"/>
        <dbReference type="ChEBI" id="CHEBI:57470"/>
        <dbReference type="ChEBI" id="CHEBI:57856"/>
        <dbReference type="ChEBI" id="CHEBI:59789"/>
        <dbReference type="EC" id="2.1.1.144"/>
    </reaction>
</comment>
<comment type="subcellular location">
    <subcellularLocation>
        <location evidence="1">Cytoplasm</location>
    </subcellularLocation>
</comment>
<comment type="similarity">
    <text evidence="1">Belongs to the methyltransferase superfamily. Tam family.</text>
</comment>
<reference key="1">
    <citation type="journal article" date="2005" name="Nucleic Acids Res.">
        <title>Genome dynamics and diversity of Shigella species, the etiologic agents of bacillary dysentery.</title>
        <authorList>
            <person name="Yang F."/>
            <person name="Yang J."/>
            <person name="Zhang X."/>
            <person name="Chen L."/>
            <person name="Jiang Y."/>
            <person name="Yan Y."/>
            <person name="Tang X."/>
            <person name="Wang J."/>
            <person name="Xiong Z."/>
            <person name="Dong J."/>
            <person name="Xue Y."/>
            <person name="Zhu Y."/>
            <person name="Xu X."/>
            <person name="Sun L."/>
            <person name="Chen S."/>
            <person name="Nie H."/>
            <person name="Peng J."/>
            <person name="Xu J."/>
            <person name="Wang Y."/>
            <person name="Yuan Z."/>
            <person name="Wen Y."/>
            <person name="Yao Z."/>
            <person name="Shen Y."/>
            <person name="Qiang B."/>
            <person name="Hou Y."/>
            <person name="Yu J."/>
            <person name="Jin Q."/>
        </authorList>
    </citation>
    <scope>NUCLEOTIDE SEQUENCE [LARGE SCALE GENOMIC DNA]</scope>
    <source>
        <strain>Sd197</strain>
    </source>
</reference>
<evidence type="ECO:0000255" key="1">
    <source>
        <dbReference type="HAMAP-Rule" id="MF_00560"/>
    </source>
</evidence>
<keyword id="KW-0963">Cytoplasm</keyword>
<keyword id="KW-0489">Methyltransferase</keyword>
<keyword id="KW-1185">Reference proteome</keyword>
<keyword id="KW-0949">S-adenosyl-L-methionine</keyword>
<keyword id="KW-0808">Transferase</keyword>
<accession>Q32G05</accession>
<dbReference type="EC" id="2.1.1.144" evidence="1"/>
<dbReference type="EMBL" id="CP000034">
    <property type="protein sequence ID" value="ABB61750.1"/>
    <property type="molecule type" value="Genomic_DNA"/>
</dbReference>
<dbReference type="RefSeq" id="WP_001286580.1">
    <property type="nucleotide sequence ID" value="NC_007606.1"/>
</dbReference>
<dbReference type="RefSeq" id="YP_403241.1">
    <property type="nucleotide sequence ID" value="NC_007606.1"/>
</dbReference>
<dbReference type="SMR" id="Q32G05"/>
<dbReference type="STRING" id="300267.SDY_1625"/>
<dbReference type="EnsemblBacteria" id="ABB61750">
    <property type="protein sequence ID" value="ABB61750"/>
    <property type="gene ID" value="SDY_1625"/>
</dbReference>
<dbReference type="KEGG" id="sdy:SDY_1625"/>
<dbReference type="PATRIC" id="fig|300267.13.peg.1957"/>
<dbReference type="HOGENOM" id="CLU_037990_5_2_6"/>
<dbReference type="Proteomes" id="UP000002716">
    <property type="component" value="Chromosome"/>
</dbReference>
<dbReference type="GO" id="GO:0005737">
    <property type="term" value="C:cytoplasm"/>
    <property type="evidence" value="ECO:0007669"/>
    <property type="project" value="UniProtKB-SubCell"/>
</dbReference>
<dbReference type="GO" id="GO:0030798">
    <property type="term" value="F:trans-aconitate 2-methyltransferase activity"/>
    <property type="evidence" value="ECO:0007669"/>
    <property type="project" value="UniProtKB-UniRule"/>
</dbReference>
<dbReference type="GO" id="GO:0032259">
    <property type="term" value="P:methylation"/>
    <property type="evidence" value="ECO:0007669"/>
    <property type="project" value="UniProtKB-KW"/>
</dbReference>
<dbReference type="CDD" id="cd02440">
    <property type="entry name" value="AdoMet_MTases"/>
    <property type="match status" value="1"/>
</dbReference>
<dbReference type="Gene3D" id="1.10.150.290">
    <property type="entry name" value="S-adenosyl-L-methionine-dependent methyltransferases"/>
    <property type="match status" value="1"/>
</dbReference>
<dbReference type="Gene3D" id="3.40.50.150">
    <property type="entry name" value="Vaccinia Virus protein VP39"/>
    <property type="match status" value="1"/>
</dbReference>
<dbReference type="HAMAP" id="MF_00560">
    <property type="entry name" value="Tran_acon_Me_trans"/>
    <property type="match status" value="1"/>
</dbReference>
<dbReference type="InterPro" id="IPR041698">
    <property type="entry name" value="Methyltransf_25"/>
</dbReference>
<dbReference type="InterPro" id="IPR029063">
    <property type="entry name" value="SAM-dependent_MTases_sf"/>
</dbReference>
<dbReference type="InterPro" id="IPR023506">
    <property type="entry name" value="Trans-aconitate_MeTrfase"/>
</dbReference>
<dbReference type="InterPro" id="IPR023149">
    <property type="entry name" value="Trans_acon_MeTrfase_C"/>
</dbReference>
<dbReference type="NCBIfam" id="NF002463">
    <property type="entry name" value="PRK01683.1"/>
    <property type="match status" value="1"/>
</dbReference>
<dbReference type="PANTHER" id="PTHR43861:SF1">
    <property type="entry name" value="TRANS-ACONITATE 2-METHYLTRANSFERASE"/>
    <property type="match status" value="1"/>
</dbReference>
<dbReference type="PANTHER" id="PTHR43861">
    <property type="entry name" value="TRANS-ACONITATE 2-METHYLTRANSFERASE-RELATED"/>
    <property type="match status" value="1"/>
</dbReference>
<dbReference type="Pfam" id="PF13649">
    <property type="entry name" value="Methyltransf_25"/>
    <property type="match status" value="1"/>
</dbReference>
<dbReference type="SUPFAM" id="SSF53335">
    <property type="entry name" value="S-adenosyl-L-methionine-dependent methyltransferases"/>
    <property type="match status" value="1"/>
</dbReference>
<sequence length="252" mass="28981">MSDWNPSLYLHFAAERSRPAVELLARVPLENVEYVADLGCGPGNSTALLHQRWPAARITGIDSSPAMIAEARSALPDCQFVEADIRNWQPEQALDLIFANASLQWLPDHYELFPHLVSLLNPQGVLAVQMPDNWLEPTHVLMREVAWEQNYSDRGREPLAGVHAYYDILSEAGCEVDIWRTTYYHQMPSRQAIIDWVTATGLRPWLQDLTESEQQLFLTRYHQMLEEQYPLQENGQILLAFPRLFIVARRTE</sequence>
<organism>
    <name type="scientific">Shigella dysenteriae serotype 1 (strain Sd197)</name>
    <dbReference type="NCBI Taxonomy" id="300267"/>
    <lineage>
        <taxon>Bacteria</taxon>
        <taxon>Pseudomonadati</taxon>
        <taxon>Pseudomonadota</taxon>
        <taxon>Gammaproteobacteria</taxon>
        <taxon>Enterobacterales</taxon>
        <taxon>Enterobacteriaceae</taxon>
        <taxon>Shigella</taxon>
    </lineage>
</organism>
<proteinExistence type="inferred from homology"/>